<accession>P45940</accession>
<dbReference type="EMBL" id="D32216">
    <property type="protein sequence ID" value="BAA06957.1"/>
    <property type="molecule type" value="Genomic_DNA"/>
</dbReference>
<dbReference type="EMBL" id="D84432">
    <property type="protein sequence ID" value="BAA12421.1"/>
    <property type="molecule type" value="Genomic_DNA"/>
</dbReference>
<dbReference type="EMBL" id="AL009126">
    <property type="protein sequence ID" value="CAB14534.1"/>
    <property type="molecule type" value="Genomic_DNA"/>
</dbReference>
<dbReference type="PIR" id="D69949">
    <property type="entry name" value="D69949"/>
</dbReference>
<dbReference type="RefSeq" id="NP_390470.1">
    <property type="nucleotide sequence ID" value="NC_000964.3"/>
</dbReference>
<dbReference type="RefSeq" id="WP_003229944.1">
    <property type="nucleotide sequence ID" value="NZ_OZ025638.1"/>
</dbReference>
<dbReference type="SMR" id="P45940"/>
<dbReference type="FunCoup" id="P45940">
    <property type="interactions" value="145"/>
</dbReference>
<dbReference type="STRING" id="224308.BSU25930"/>
<dbReference type="PaxDb" id="224308-BSU25930"/>
<dbReference type="EnsemblBacteria" id="CAB14534">
    <property type="protein sequence ID" value="CAB14534"/>
    <property type="gene ID" value="BSU_25930"/>
</dbReference>
<dbReference type="GeneID" id="937759"/>
<dbReference type="KEGG" id="bsu:BSU25930"/>
<dbReference type="PATRIC" id="fig|224308.179.peg.2818"/>
<dbReference type="eggNOG" id="ENOG5030D3R">
    <property type="taxonomic scope" value="Bacteria"/>
</dbReference>
<dbReference type="InParanoid" id="P45940"/>
<dbReference type="OrthoDB" id="2891646at2"/>
<dbReference type="PhylomeDB" id="P45940"/>
<dbReference type="BioCyc" id="BSUB:BSU25930-MONOMER"/>
<dbReference type="Proteomes" id="UP000001570">
    <property type="component" value="Chromosome"/>
</dbReference>
<dbReference type="InterPro" id="IPR010022">
    <property type="entry name" value="XkdX"/>
</dbReference>
<dbReference type="NCBIfam" id="TIGR01669">
    <property type="entry name" value="phage_XkdX"/>
    <property type="match status" value="1"/>
</dbReference>
<dbReference type="Pfam" id="PF09693">
    <property type="entry name" value="Phage_XkdX"/>
    <property type="match status" value="1"/>
</dbReference>
<comment type="similarity">
    <text evidence="1">To B.subtilis XkdX.</text>
</comment>
<keyword id="KW-1185">Reference proteome</keyword>
<name>YQCE_BACSU</name>
<organism>
    <name type="scientific">Bacillus subtilis (strain 168)</name>
    <dbReference type="NCBI Taxonomy" id="224308"/>
    <lineage>
        <taxon>Bacteria</taxon>
        <taxon>Bacillati</taxon>
        <taxon>Bacillota</taxon>
        <taxon>Bacilli</taxon>
        <taxon>Bacillales</taxon>
        <taxon>Bacillaceae</taxon>
        <taxon>Bacillus</taxon>
    </lineage>
</organism>
<gene>
    <name type="primary">yqcE</name>
    <name type="ordered locus">BSU25930</name>
</gene>
<sequence length="54" mass="6267">MNYWVLALHYNWASSEMVKQAIHLKDCSPEDLQEGIEKKLITAEQYKEITGEAI</sequence>
<evidence type="ECO:0000305" key="1"/>
<reference key="1">
    <citation type="journal article" date="1995" name="Microbiology">
        <title>Complete nucleotide sequence of a skin element excised by DNA rearrangement during sporulation in Bacillus subtilis.</title>
        <authorList>
            <person name="Takemaru K."/>
            <person name="Mizuno M."/>
            <person name="Sato T."/>
            <person name="Takeuchi M."/>
            <person name="Kobayashi Y."/>
        </authorList>
    </citation>
    <scope>NUCLEOTIDE SEQUENCE [GENOMIC DNA]</scope>
    <source>
        <strain>168 / JH642</strain>
    </source>
</reference>
<reference key="2">
    <citation type="journal article" date="1996" name="Microbiology">
        <title>Systematic sequencing of the 283 kb 210 degrees-232 degrees region of the Bacillus subtilis genome containing the skin element and many sporulation genes.</title>
        <authorList>
            <person name="Mizuno M."/>
            <person name="Masuda S."/>
            <person name="Takemaru K."/>
            <person name="Hosono S."/>
            <person name="Sato T."/>
            <person name="Takeuchi M."/>
            <person name="Kobayashi Y."/>
        </authorList>
    </citation>
    <scope>NUCLEOTIDE SEQUENCE [GENOMIC DNA]</scope>
    <source>
        <strain>168 / JH642</strain>
    </source>
</reference>
<reference key="3">
    <citation type="journal article" date="1997" name="Nature">
        <title>The complete genome sequence of the Gram-positive bacterium Bacillus subtilis.</title>
        <authorList>
            <person name="Kunst F."/>
            <person name="Ogasawara N."/>
            <person name="Moszer I."/>
            <person name="Albertini A.M."/>
            <person name="Alloni G."/>
            <person name="Azevedo V."/>
            <person name="Bertero M.G."/>
            <person name="Bessieres P."/>
            <person name="Bolotin A."/>
            <person name="Borchert S."/>
            <person name="Borriss R."/>
            <person name="Boursier L."/>
            <person name="Brans A."/>
            <person name="Braun M."/>
            <person name="Brignell S.C."/>
            <person name="Bron S."/>
            <person name="Brouillet S."/>
            <person name="Bruschi C.V."/>
            <person name="Caldwell B."/>
            <person name="Capuano V."/>
            <person name="Carter N.M."/>
            <person name="Choi S.-K."/>
            <person name="Codani J.-J."/>
            <person name="Connerton I.F."/>
            <person name="Cummings N.J."/>
            <person name="Daniel R.A."/>
            <person name="Denizot F."/>
            <person name="Devine K.M."/>
            <person name="Duesterhoeft A."/>
            <person name="Ehrlich S.D."/>
            <person name="Emmerson P.T."/>
            <person name="Entian K.-D."/>
            <person name="Errington J."/>
            <person name="Fabret C."/>
            <person name="Ferrari E."/>
            <person name="Foulger D."/>
            <person name="Fritz C."/>
            <person name="Fujita M."/>
            <person name="Fujita Y."/>
            <person name="Fuma S."/>
            <person name="Galizzi A."/>
            <person name="Galleron N."/>
            <person name="Ghim S.-Y."/>
            <person name="Glaser P."/>
            <person name="Goffeau A."/>
            <person name="Golightly E.J."/>
            <person name="Grandi G."/>
            <person name="Guiseppi G."/>
            <person name="Guy B.J."/>
            <person name="Haga K."/>
            <person name="Haiech J."/>
            <person name="Harwood C.R."/>
            <person name="Henaut A."/>
            <person name="Hilbert H."/>
            <person name="Holsappel S."/>
            <person name="Hosono S."/>
            <person name="Hullo M.-F."/>
            <person name="Itaya M."/>
            <person name="Jones L.-M."/>
            <person name="Joris B."/>
            <person name="Karamata D."/>
            <person name="Kasahara Y."/>
            <person name="Klaerr-Blanchard M."/>
            <person name="Klein C."/>
            <person name="Kobayashi Y."/>
            <person name="Koetter P."/>
            <person name="Koningstein G."/>
            <person name="Krogh S."/>
            <person name="Kumano M."/>
            <person name="Kurita K."/>
            <person name="Lapidus A."/>
            <person name="Lardinois S."/>
            <person name="Lauber J."/>
            <person name="Lazarevic V."/>
            <person name="Lee S.-M."/>
            <person name="Levine A."/>
            <person name="Liu H."/>
            <person name="Masuda S."/>
            <person name="Mauel C."/>
            <person name="Medigue C."/>
            <person name="Medina N."/>
            <person name="Mellado R.P."/>
            <person name="Mizuno M."/>
            <person name="Moestl D."/>
            <person name="Nakai S."/>
            <person name="Noback M."/>
            <person name="Noone D."/>
            <person name="O'Reilly M."/>
            <person name="Ogawa K."/>
            <person name="Ogiwara A."/>
            <person name="Oudega B."/>
            <person name="Park S.-H."/>
            <person name="Parro V."/>
            <person name="Pohl T.M."/>
            <person name="Portetelle D."/>
            <person name="Porwollik S."/>
            <person name="Prescott A.M."/>
            <person name="Presecan E."/>
            <person name="Pujic P."/>
            <person name="Purnelle B."/>
            <person name="Rapoport G."/>
            <person name="Rey M."/>
            <person name="Reynolds S."/>
            <person name="Rieger M."/>
            <person name="Rivolta C."/>
            <person name="Rocha E."/>
            <person name="Roche B."/>
            <person name="Rose M."/>
            <person name="Sadaie Y."/>
            <person name="Sato T."/>
            <person name="Scanlan E."/>
            <person name="Schleich S."/>
            <person name="Schroeter R."/>
            <person name="Scoffone F."/>
            <person name="Sekiguchi J."/>
            <person name="Sekowska A."/>
            <person name="Seror S.J."/>
            <person name="Serror P."/>
            <person name="Shin B.-S."/>
            <person name="Soldo B."/>
            <person name="Sorokin A."/>
            <person name="Tacconi E."/>
            <person name="Takagi T."/>
            <person name="Takahashi H."/>
            <person name="Takemaru K."/>
            <person name="Takeuchi M."/>
            <person name="Tamakoshi A."/>
            <person name="Tanaka T."/>
            <person name="Terpstra P."/>
            <person name="Tognoni A."/>
            <person name="Tosato V."/>
            <person name="Uchiyama S."/>
            <person name="Vandenbol M."/>
            <person name="Vannier F."/>
            <person name="Vassarotti A."/>
            <person name="Viari A."/>
            <person name="Wambutt R."/>
            <person name="Wedler E."/>
            <person name="Wedler H."/>
            <person name="Weitzenegger T."/>
            <person name="Winters P."/>
            <person name="Wipat A."/>
            <person name="Yamamoto H."/>
            <person name="Yamane K."/>
            <person name="Yasumoto K."/>
            <person name="Yata K."/>
            <person name="Yoshida K."/>
            <person name="Yoshikawa H.-F."/>
            <person name="Zumstein E."/>
            <person name="Yoshikawa H."/>
            <person name="Danchin A."/>
        </authorList>
    </citation>
    <scope>NUCLEOTIDE SEQUENCE [LARGE SCALE GENOMIC DNA]</scope>
    <source>
        <strain>168</strain>
    </source>
</reference>
<reference key="4">
    <citation type="journal article" date="1995" name="Gene">
        <title>Analysis of a Bacillus subtilis genome fragment using a co-operative computer system prototype.</title>
        <authorList>
            <person name="Medigue C."/>
            <person name="Moszer I."/>
            <person name="Viari A."/>
            <person name="Danchin A."/>
        </authorList>
    </citation>
    <scope>IDENTIFICATION</scope>
</reference>
<proteinExistence type="predicted"/>
<feature type="chain" id="PRO_0000049775" description="Uncharacterized protein YqcE">
    <location>
        <begin position="1"/>
        <end position="54"/>
    </location>
</feature>
<protein>
    <recommendedName>
        <fullName>Uncharacterized protein YqcE</fullName>
    </recommendedName>
</protein>